<dbReference type="EC" id="3.6.5.-" evidence="1"/>
<dbReference type="EMBL" id="CP000024">
    <property type="protein sequence ID" value="AAV63035.1"/>
    <property type="molecule type" value="Genomic_DNA"/>
</dbReference>
<dbReference type="SMR" id="Q5LYR4"/>
<dbReference type="KEGG" id="stc:str1504"/>
<dbReference type="HOGENOM" id="CLU_011747_2_1_9"/>
<dbReference type="GO" id="GO:0005737">
    <property type="term" value="C:cytoplasm"/>
    <property type="evidence" value="ECO:0007669"/>
    <property type="project" value="UniProtKB-SubCell"/>
</dbReference>
<dbReference type="GO" id="GO:0005525">
    <property type="term" value="F:GTP binding"/>
    <property type="evidence" value="ECO:0007669"/>
    <property type="project" value="UniProtKB-UniRule"/>
</dbReference>
<dbReference type="GO" id="GO:0003924">
    <property type="term" value="F:GTPase activity"/>
    <property type="evidence" value="ECO:0007669"/>
    <property type="project" value="UniProtKB-UniRule"/>
</dbReference>
<dbReference type="GO" id="GO:0000287">
    <property type="term" value="F:magnesium ion binding"/>
    <property type="evidence" value="ECO:0007669"/>
    <property type="project" value="InterPro"/>
</dbReference>
<dbReference type="GO" id="GO:0042254">
    <property type="term" value="P:ribosome biogenesis"/>
    <property type="evidence" value="ECO:0007669"/>
    <property type="project" value="UniProtKB-UniRule"/>
</dbReference>
<dbReference type="CDD" id="cd01898">
    <property type="entry name" value="Obg"/>
    <property type="match status" value="1"/>
</dbReference>
<dbReference type="FunFam" id="2.70.210.12:FF:000001">
    <property type="entry name" value="GTPase Obg"/>
    <property type="match status" value="1"/>
</dbReference>
<dbReference type="FunFam" id="3.40.50.300:FF:000515">
    <property type="entry name" value="GTPase Obg"/>
    <property type="match status" value="1"/>
</dbReference>
<dbReference type="Gene3D" id="3.30.300.350">
    <property type="entry name" value="GTP-binding protein OBG, C-terminal domain"/>
    <property type="match status" value="1"/>
</dbReference>
<dbReference type="Gene3D" id="2.70.210.12">
    <property type="entry name" value="GTP1/OBG domain"/>
    <property type="match status" value="1"/>
</dbReference>
<dbReference type="Gene3D" id="3.40.50.300">
    <property type="entry name" value="P-loop containing nucleotide triphosphate hydrolases"/>
    <property type="match status" value="1"/>
</dbReference>
<dbReference type="HAMAP" id="MF_01454">
    <property type="entry name" value="GTPase_Obg"/>
    <property type="match status" value="1"/>
</dbReference>
<dbReference type="InterPro" id="IPR031167">
    <property type="entry name" value="G_OBG"/>
</dbReference>
<dbReference type="InterPro" id="IPR006073">
    <property type="entry name" value="GTP-bd"/>
</dbReference>
<dbReference type="InterPro" id="IPR014100">
    <property type="entry name" value="GTP-bd_Obg/CgtA"/>
</dbReference>
<dbReference type="InterPro" id="IPR036346">
    <property type="entry name" value="GTP-bd_prot_GTP1/OBG_C_sf"/>
</dbReference>
<dbReference type="InterPro" id="IPR006074">
    <property type="entry name" value="GTP1-OBG_CS"/>
</dbReference>
<dbReference type="InterPro" id="IPR006169">
    <property type="entry name" value="GTP1_OBG_dom"/>
</dbReference>
<dbReference type="InterPro" id="IPR036726">
    <property type="entry name" value="GTP1_OBG_dom_sf"/>
</dbReference>
<dbReference type="InterPro" id="IPR045086">
    <property type="entry name" value="OBG_GTPase"/>
</dbReference>
<dbReference type="InterPro" id="IPR015349">
    <property type="entry name" value="OCT_dom"/>
</dbReference>
<dbReference type="InterPro" id="IPR027417">
    <property type="entry name" value="P-loop_NTPase"/>
</dbReference>
<dbReference type="InterPro" id="IPR005225">
    <property type="entry name" value="Small_GTP-bd"/>
</dbReference>
<dbReference type="NCBIfam" id="TIGR02729">
    <property type="entry name" value="Obg_CgtA"/>
    <property type="match status" value="1"/>
</dbReference>
<dbReference type="NCBIfam" id="TIGR03595">
    <property type="entry name" value="Obg_CgtA_exten"/>
    <property type="match status" value="1"/>
</dbReference>
<dbReference type="NCBIfam" id="NF008954">
    <property type="entry name" value="PRK12296.1"/>
    <property type="match status" value="1"/>
</dbReference>
<dbReference type="NCBIfam" id="NF008955">
    <property type="entry name" value="PRK12297.1"/>
    <property type="match status" value="1"/>
</dbReference>
<dbReference type="NCBIfam" id="NF008956">
    <property type="entry name" value="PRK12299.1"/>
    <property type="match status" value="1"/>
</dbReference>
<dbReference type="NCBIfam" id="TIGR00231">
    <property type="entry name" value="small_GTP"/>
    <property type="match status" value="1"/>
</dbReference>
<dbReference type="PANTHER" id="PTHR11702">
    <property type="entry name" value="DEVELOPMENTALLY REGULATED GTP-BINDING PROTEIN-RELATED"/>
    <property type="match status" value="1"/>
</dbReference>
<dbReference type="PANTHER" id="PTHR11702:SF31">
    <property type="entry name" value="MITOCHONDRIAL RIBOSOME-ASSOCIATED GTPASE 2"/>
    <property type="match status" value="1"/>
</dbReference>
<dbReference type="Pfam" id="PF09269">
    <property type="entry name" value="DUF1967"/>
    <property type="match status" value="1"/>
</dbReference>
<dbReference type="Pfam" id="PF01018">
    <property type="entry name" value="GTP1_OBG"/>
    <property type="match status" value="1"/>
</dbReference>
<dbReference type="Pfam" id="PF01926">
    <property type="entry name" value="MMR_HSR1"/>
    <property type="match status" value="1"/>
</dbReference>
<dbReference type="PIRSF" id="PIRSF002401">
    <property type="entry name" value="GTP_bd_Obg/CgtA"/>
    <property type="match status" value="1"/>
</dbReference>
<dbReference type="PRINTS" id="PR00326">
    <property type="entry name" value="GTP1OBG"/>
</dbReference>
<dbReference type="SUPFAM" id="SSF102741">
    <property type="entry name" value="Obg GTP-binding protein C-terminal domain"/>
    <property type="match status" value="1"/>
</dbReference>
<dbReference type="SUPFAM" id="SSF82051">
    <property type="entry name" value="Obg GTP-binding protein N-terminal domain"/>
    <property type="match status" value="1"/>
</dbReference>
<dbReference type="SUPFAM" id="SSF52540">
    <property type="entry name" value="P-loop containing nucleoside triphosphate hydrolases"/>
    <property type="match status" value="1"/>
</dbReference>
<dbReference type="PROSITE" id="PS51710">
    <property type="entry name" value="G_OBG"/>
    <property type="match status" value="1"/>
</dbReference>
<dbReference type="PROSITE" id="PS00905">
    <property type="entry name" value="GTP1_OBG"/>
    <property type="match status" value="1"/>
</dbReference>
<dbReference type="PROSITE" id="PS51883">
    <property type="entry name" value="OBG"/>
    <property type="match status" value="1"/>
</dbReference>
<dbReference type="PROSITE" id="PS51881">
    <property type="entry name" value="OCT"/>
    <property type="match status" value="1"/>
</dbReference>
<gene>
    <name evidence="1" type="primary">obg</name>
    <name type="ordered locus">str1504</name>
</gene>
<reference key="1">
    <citation type="journal article" date="2004" name="Nat. Biotechnol.">
        <title>Complete sequence and comparative genome analysis of the dairy bacterium Streptococcus thermophilus.</title>
        <authorList>
            <person name="Bolotin A."/>
            <person name="Quinquis B."/>
            <person name="Renault P."/>
            <person name="Sorokin A."/>
            <person name="Ehrlich S.D."/>
            <person name="Kulakauskas S."/>
            <person name="Lapidus A."/>
            <person name="Goltsman E."/>
            <person name="Mazur M."/>
            <person name="Pusch G.D."/>
            <person name="Fonstein M."/>
            <person name="Overbeek R."/>
            <person name="Kyprides N."/>
            <person name="Purnelle B."/>
            <person name="Prozzi D."/>
            <person name="Ngui K."/>
            <person name="Masuy D."/>
            <person name="Hancy F."/>
            <person name="Burteau S."/>
            <person name="Boutry M."/>
            <person name="Delcour J."/>
            <person name="Goffeau A."/>
            <person name="Hols P."/>
        </authorList>
    </citation>
    <scope>NUCLEOTIDE SEQUENCE [LARGE SCALE GENOMIC DNA]</scope>
    <source>
        <strain>CNRZ 1066</strain>
    </source>
</reference>
<evidence type="ECO:0000255" key="1">
    <source>
        <dbReference type="HAMAP-Rule" id="MF_01454"/>
    </source>
</evidence>
<evidence type="ECO:0000255" key="2">
    <source>
        <dbReference type="PROSITE-ProRule" id="PRU01229"/>
    </source>
</evidence>
<evidence type="ECO:0000255" key="3">
    <source>
        <dbReference type="PROSITE-ProRule" id="PRU01231"/>
    </source>
</evidence>
<evidence type="ECO:0000256" key="4">
    <source>
        <dbReference type="SAM" id="MobiDB-lite"/>
    </source>
</evidence>
<proteinExistence type="inferred from homology"/>
<protein>
    <recommendedName>
        <fullName evidence="1">GTPase Obg</fullName>
        <ecNumber evidence="1">3.6.5.-</ecNumber>
    </recommendedName>
    <alternativeName>
        <fullName evidence="1">GTP-binding protein Obg</fullName>
    </alternativeName>
</protein>
<name>OBG_STRT1</name>
<sequence length="437" mass="48637">MSMFLDTAKISVQAGRGGDGMVAFRREKYVPNGGPWGGDGGKGGSVIFKVDEGLRTLMDFRYNRKFKAKNGEKGMTKGMHGRGAEDLIVSIPPGTTVRDAETGKVITDMVEDGQEFVVAHGGRGGRGNIRFATPRNPAPEIAENGEPGEERELQLELKILADVGLVGFPSVGKSTILSVVTAAKPKIGAYHFTTIVPNLGMVRTKSGESFAMADLPGLIEGASQGVGLGTQFLRHIERTRVILHVIDMSASEGRDPYEDYLQINKELETYNLRLMERPQIIVANKMDMPEAEENLKEFKEKLAANYDEFDELPQIFPISSLAHQGLENLLEATAELLDQTDEFLLYNEDDMEQEEVYYGFNEEERPFEISRDDDASWVLSGEKLEKLFVMTNMERDESIMKFARQLRGMGVDEALRERGAKDGDIVRIGNFEFEFVD</sequence>
<accession>Q5LYR4</accession>
<keyword id="KW-0963">Cytoplasm</keyword>
<keyword id="KW-0342">GTP-binding</keyword>
<keyword id="KW-0378">Hydrolase</keyword>
<keyword id="KW-0460">Magnesium</keyword>
<keyword id="KW-0479">Metal-binding</keyword>
<keyword id="KW-0547">Nucleotide-binding</keyword>
<organism>
    <name type="scientific">Streptococcus thermophilus (strain CNRZ 1066)</name>
    <dbReference type="NCBI Taxonomy" id="299768"/>
    <lineage>
        <taxon>Bacteria</taxon>
        <taxon>Bacillati</taxon>
        <taxon>Bacillota</taxon>
        <taxon>Bacilli</taxon>
        <taxon>Lactobacillales</taxon>
        <taxon>Streptococcaceae</taxon>
        <taxon>Streptococcus</taxon>
    </lineage>
</organism>
<feature type="chain" id="PRO_0000386320" description="GTPase Obg">
    <location>
        <begin position="1"/>
        <end position="437"/>
    </location>
</feature>
<feature type="domain" description="Obg" evidence="3">
    <location>
        <begin position="2"/>
        <end position="160"/>
    </location>
</feature>
<feature type="domain" description="OBG-type G" evidence="1">
    <location>
        <begin position="161"/>
        <end position="338"/>
    </location>
</feature>
<feature type="domain" description="OCT" evidence="2">
    <location>
        <begin position="359"/>
        <end position="437"/>
    </location>
</feature>
<feature type="region of interest" description="Disordered" evidence="4">
    <location>
        <begin position="127"/>
        <end position="146"/>
    </location>
</feature>
<feature type="binding site" evidence="1">
    <location>
        <begin position="167"/>
        <end position="174"/>
    </location>
    <ligand>
        <name>GTP</name>
        <dbReference type="ChEBI" id="CHEBI:37565"/>
    </ligand>
</feature>
<feature type="binding site" evidence="1">
    <location>
        <position position="174"/>
    </location>
    <ligand>
        <name>Mg(2+)</name>
        <dbReference type="ChEBI" id="CHEBI:18420"/>
    </ligand>
</feature>
<feature type="binding site" evidence="1">
    <location>
        <begin position="192"/>
        <end position="196"/>
    </location>
    <ligand>
        <name>GTP</name>
        <dbReference type="ChEBI" id="CHEBI:37565"/>
    </ligand>
</feature>
<feature type="binding site" evidence="1">
    <location>
        <position position="194"/>
    </location>
    <ligand>
        <name>Mg(2+)</name>
        <dbReference type="ChEBI" id="CHEBI:18420"/>
    </ligand>
</feature>
<feature type="binding site" evidence="1">
    <location>
        <begin position="214"/>
        <end position="217"/>
    </location>
    <ligand>
        <name>GTP</name>
        <dbReference type="ChEBI" id="CHEBI:37565"/>
    </ligand>
</feature>
<feature type="binding site" evidence="1">
    <location>
        <begin position="284"/>
        <end position="287"/>
    </location>
    <ligand>
        <name>GTP</name>
        <dbReference type="ChEBI" id="CHEBI:37565"/>
    </ligand>
</feature>
<feature type="binding site" evidence="1">
    <location>
        <begin position="319"/>
        <end position="321"/>
    </location>
    <ligand>
        <name>GTP</name>
        <dbReference type="ChEBI" id="CHEBI:37565"/>
    </ligand>
</feature>
<comment type="function">
    <text evidence="1">An essential GTPase which binds GTP, GDP and possibly (p)ppGpp with moderate affinity, with high nucleotide exchange rates and a fairly low GTP hydrolysis rate. Plays a role in control of the cell cycle, stress response, ribosome biogenesis and in those bacteria that undergo differentiation, in morphogenesis control.</text>
</comment>
<comment type="cofactor">
    <cofactor evidence="1">
        <name>Mg(2+)</name>
        <dbReference type="ChEBI" id="CHEBI:18420"/>
    </cofactor>
</comment>
<comment type="subunit">
    <text evidence="1">Monomer.</text>
</comment>
<comment type="subcellular location">
    <subcellularLocation>
        <location evidence="1">Cytoplasm</location>
    </subcellularLocation>
</comment>
<comment type="similarity">
    <text evidence="1">Belongs to the TRAFAC class OBG-HflX-like GTPase superfamily. OBG GTPase family.</text>
</comment>